<organism>
    <name type="scientific">Azotobacter vinelandii (strain DJ / ATCC BAA-1303)</name>
    <dbReference type="NCBI Taxonomy" id="322710"/>
    <lineage>
        <taxon>Bacteria</taxon>
        <taxon>Pseudomonadati</taxon>
        <taxon>Pseudomonadota</taxon>
        <taxon>Gammaproteobacteria</taxon>
        <taxon>Pseudomonadales</taxon>
        <taxon>Pseudomonadaceae</taxon>
        <taxon>Azotobacter</taxon>
    </lineage>
</organism>
<comment type="function">
    <text evidence="1">Catalyzes the 2'-O-methylation at nucleotide C2498 in 23S rRNA.</text>
</comment>
<comment type="catalytic activity">
    <reaction evidence="1">
        <text>cytidine(2498) in 23S rRNA + S-adenosyl-L-methionine = 2'-O-methylcytidine(2498) in 23S rRNA + S-adenosyl-L-homocysteine + H(+)</text>
        <dbReference type="Rhea" id="RHEA:42788"/>
        <dbReference type="Rhea" id="RHEA-COMP:10244"/>
        <dbReference type="Rhea" id="RHEA-COMP:10245"/>
        <dbReference type="ChEBI" id="CHEBI:15378"/>
        <dbReference type="ChEBI" id="CHEBI:57856"/>
        <dbReference type="ChEBI" id="CHEBI:59789"/>
        <dbReference type="ChEBI" id="CHEBI:74495"/>
        <dbReference type="ChEBI" id="CHEBI:82748"/>
        <dbReference type="EC" id="2.1.1.186"/>
    </reaction>
</comment>
<comment type="subunit">
    <text evidence="1">Monomer.</text>
</comment>
<comment type="subcellular location">
    <subcellularLocation>
        <location evidence="1">Cytoplasm</location>
    </subcellularLocation>
</comment>
<comment type="similarity">
    <text evidence="1">Belongs to the class I-like SAM-binding methyltransferase superfamily. RNA methyltransferase RlmE family. RlmM subfamily.</text>
</comment>
<gene>
    <name evidence="1" type="primary">rlmM</name>
    <name type="ordered locus">Avin_20050</name>
</gene>
<reference key="1">
    <citation type="journal article" date="2009" name="J. Bacteriol.">
        <title>Genome sequence of Azotobacter vinelandii, an obligate aerobe specialized to support diverse anaerobic metabolic processes.</title>
        <authorList>
            <person name="Setubal J.C."/>
            <person name="Dos Santos P."/>
            <person name="Goldman B.S."/>
            <person name="Ertesvaag H."/>
            <person name="Espin G."/>
            <person name="Rubio L.M."/>
            <person name="Valla S."/>
            <person name="Almeida N.F."/>
            <person name="Balasubramanian D."/>
            <person name="Cromes L."/>
            <person name="Curatti L."/>
            <person name="Du Z."/>
            <person name="Godsy E."/>
            <person name="Goodner B."/>
            <person name="Hellner-Burris K."/>
            <person name="Hernandez J.A."/>
            <person name="Houmiel K."/>
            <person name="Imperial J."/>
            <person name="Kennedy C."/>
            <person name="Larson T.J."/>
            <person name="Latreille P."/>
            <person name="Ligon L.S."/>
            <person name="Lu J."/>
            <person name="Maerk M."/>
            <person name="Miller N.M."/>
            <person name="Norton S."/>
            <person name="O'Carroll I.P."/>
            <person name="Paulsen I."/>
            <person name="Raulfs E.C."/>
            <person name="Roemer R."/>
            <person name="Rosser J."/>
            <person name="Segura D."/>
            <person name="Slater S."/>
            <person name="Stricklin S.L."/>
            <person name="Studholme D.J."/>
            <person name="Sun J."/>
            <person name="Viana C.J."/>
            <person name="Wallin E."/>
            <person name="Wang B."/>
            <person name="Wheeler C."/>
            <person name="Zhu H."/>
            <person name="Dean D.R."/>
            <person name="Dixon R."/>
            <person name="Wood D."/>
        </authorList>
    </citation>
    <scope>NUCLEOTIDE SEQUENCE [LARGE SCALE GENOMIC DNA]</scope>
    <source>
        <strain>DJ / ATCC BAA-1303</strain>
    </source>
</reference>
<protein>
    <recommendedName>
        <fullName evidence="1">Ribosomal RNA large subunit methyltransferase M</fullName>
        <ecNumber evidence="1">2.1.1.186</ecNumber>
    </recommendedName>
    <alternativeName>
        <fullName evidence="1">23S rRNA (cytidine2498-2'-O)-methyltransferase</fullName>
    </alternativeName>
    <alternativeName>
        <fullName evidence="1">23S rRNA 2'-O-ribose methyltransferase RlmM</fullName>
    </alternativeName>
</protein>
<sequence>MNSLLLHCRPGFEGEVCAEIGEHAGRLNVAGYARAKPNSAHAEFVCSEPGGAERLMRELRFAGLVFPRQWARGAFVELPESERIGVLLEHLAAYPVCGSLWLEVLDSNEGKELSTFCRKFEVPLRKALGKTGRLLDDPRRPRLLLTFRSGREVFLGLAEPDNSAAWPMGIPRLKFPREAPSRSTLKLEEAWHQFIPREAWDLRLAPGMSAVDLGAAPGGWTWQLVNRHMKVTAVDNGPMAQSLMDSGLVEHVRADGFVFRPRRPVDWMVCDIVEKPARTAALIETWLGEGLCREAVVNLKLPMKQRHAEVRRLLERIRDGLSARGAKVSVACRQLYHDREEVTCHLCRLPAPA</sequence>
<proteinExistence type="inferred from homology"/>
<keyword id="KW-0963">Cytoplasm</keyword>
<keyword id="KW-0489">Methyltransferase</keyword>
<keyword id="KW-0698">rRNA processing</keyword>
<keyword id="KW-0949">S-adenosyl-L-methionine</keyword>
<keyword id="KW-0808">Transferase</keyword>
<name>RLMM_AZOVD</name>
<feature type="chain" id="PRO_1000215467" description="Ribosomal RNA large subunit methyltransferase M">
    <location>
        <begin position="1"/>
        <end position="353"/>
    </location>
</feature>
<feature type="active site" description="Proton acceptor" evidence="1">
    <location>
        <position position="300"/>
    </location>
</feature>
<feature type="binding site" evidence="1">
    <location>
        <position position="183"/>
    </location>
    <ligand>
        <name>S-adenosyl-L-methionine</name>
        <dbReference type="ChEBI" id="CHEBI:59789"/>
    </ligand>
</feature>
<feature type="binding site" evidence="1">
    <location>
        <begin position="216"/>
        <end position="219"/>
    </location>
    <ligand>
        <name>S-adenosyl-L-methionine</name>
        <dbReference type="ChEBI" id="CHEBI:59789"/>
    </ligand>
</feature>
<feature type="binding site" evidence="1">
    <location>
        <position position="235"/>
    </location>
    <ligand>
        <name>S-adenosyl-L-methionine</name>
        <dbReference type="ChEBI" id="CHEBI:59789"/>
    </ligand>
</feature>
<feature type="binding site" evidence="1">
    <location>
        <position position="255"/>
    </location>
    <ligand>
        <name>S-adenosyl-L-methionine</name>
        <dbReference type="ChEBI" id="CHEBI:59789"/>
    </ligand>
</feature>
<feature type="binding site" evidence="1">
    <location>
        <position position="271"/>
    </location>
    <ligand>
        <name>S-adenosyl-L-methionine</name>
        <dbReference type="ChEBI" id="CHEBI:59789"/>
    </ligand>
</feature>
<evidence type="ECO:0000255" key="1">
    <source>
        <dbReference type="HAMAP-Rule" id="MF_01551"/>
    </source>
</evidence>
<dbReference type="EC" id="2.1.1.186" evidence="1"/>
<dbReference type="EMBL" id="CP001157">
    <property type="protein sequence ID" value="ACO78212.1"/>
    <property type="molecule type" value="Genomic_DNA"/>
</dbReference>
<dbReference type="RefSeq" id="WP_012700621.1">
    <property type="nucleotide sequence ID" value="NC_012560.1"/>
</dbReference>
<dbReference type="SMR" id="C1DEM7"/>
<dbReference type="STRING" id="322710.Avin_20050"/>
<dbReference type="EnsemblBacteria" id="ACO78212">
    <property type="protein sequence ID" value="ACO78212"/>
    <property type="gene ID" value="Avin_20050"/>
</dbReference>
<dbReference type="GeneID" id="88185241"/>
<dbReference type="KEGG" id="avn:Avin_20050"/>
<dbReference type="eggNOG" id="COG2933">
    <property type="taxonomic scope" value="Bacteria"/>
</dbReference>
<dbReference type="HOGENOM" id="CLU_043780_0_0_6"/>
<dbReference type="OrthoDB" id="154490at2"/>
<dbReference type="Proteomes" id="UP000002424">
    <property type="component" value="Chromosome"/>
</dbReference>
<dbReference type="GO" id="GO:0005737">
    <property type="term" value="C:cytoplasm"/>
    <property type="evidence" value="ECO:0007669"/>
    <property type="project" value="UniProtKB-SubCell"/>
</dbReference>
<dbReference type="GO" id="GO:0008757">
    <property type="term" value="F:S-adenosylmethionine-dependent methyltransferase activity"/>
    <property type="evidence" value="ECO:0007669"/>
    <property type="project" value="UniProtKB-UniRule"/>
</dbReference>
<dbReference type="GO" id="GO:0032259">
    <property type="term" value="P:methylation"/>
    <property type="evidence" value="ECO:0007669"/>
    <property type="project" value="UniProtKB-KW"/>
</dbReference>
<dbReference type="GO" id="GO:0006364">
    <property type="term" value="P:rRNA processing"/>
    <property type="evidence" value="ECO:0007669"/>
    <property type="project" value="UniProtKB-UniRule"/>
</dbReference>
<dbReference type="Gene3D" id="3.30.2300.20">
    <property type="match status" value="1"/>
</dbReference>
<dbReference type="Gene3D" id="3.30.70.2810">
    <property type="match status" value="1"/>
</dbReference>
<dbReference type="Gene3D" id="3.40.50.150">
    <property type="entry name" value="Vaccinia Virus protein VP39"/>
    <property type="match status" value="1"/>
</dbReference>
<dbReference type="HAMAP" id="MF_01551">
    <property type="entry name" value="23SrRNA_methyltr_M"/>
    <property type="match status" value="1"/>
</dbReference>
<dbReference type="InterPro" id="IPR040739">
    <property type="entry name" value="RlmM_FDX"/>
</dbReference>
<dbReference type="InterPro" id="IPR048646">
    <property type="entry name" value="RlmM_THUMP-like"/>
</dbReference>
<dbReference type="InterPro" id="IPR002877">
    <property type="entry name" value="RNA_MeTrfase_FtsJ_dom"/>
</dbReference>
<dbReference type="InterPro" id="IPR011224">
    <property type="entry name" value="rRNA_MeTrfase_M"/>
</dbReference>
<dbReference type="InterPro" id="IPR029063">
    <property type="entry name" value="SAM-dependent_MTases_sf"/>
</dbReference>
<dbReference type="NCBIfam" id="NF008734">
    <property type="entry name" value="PRK11760.1"/>
    <property type="match status" value="1"/>
</dbReference>
<dbReference type="PANTHER" id="PTHR37524">
    <property type="entry name" value="RIBOSOMAL RNA LARGE SUBUNIT METHYLTRANSFERASE M"/>
    <property type="match status" value="1"/>
</dbReference>
<dbReference type="PANTHER" id="PTHR37524:SF2">
    <property type="entry name" value="RIBOSOMAL RNA METHYLTRANSFERASE FTSJ DOMAIN-CONTAINING PROTEIN"/>
    <property type="match status" value="1"/>
</dbReference>
<dbReference type="Pfam" id="PF01728">
    <property type="entry name" value="FtsJ"/>
    <property type="match status" value="1"/>
</dbReference>
<dbReference type="Pfam" id="PF18125">
    <property type="entry name" value="RlmM_FDX"/>
    <property type="match status" value="1"/>
</dbReference>
<dbReference type="Pfam" id="PF21239">
    <property type="entry name" value="RLMM_N"/>
    <property type="match status" value="1"/>
</dbReference>
<dbReference type="PIRSF" id="PIRSF028774">
    <property type="entry name" value="UCP028774"/>
    <property type="match status" value="1"/>
</dbReference>
<dbReference type="SUPFAM" id="SSF53335">
    <property type="entry name" value="S-adenosyl-L-methionine-dependent methyltransferases"/>
    <property type="match status" value="1"/>
</dbReference>
<accession>C1DEM7</accession>